<organism>
    <name type="scientific">Streptococcus agalactiae serotype V (strain ATCC BAA-611 / 2603 V/R)</name>
    <dbReference type="NCBI Taxonomy" id="208435"/>
    <lineage>
        <taxon>Bacteria</taxon>
        <taxon>Bacillati</taxon>
        <taxon>Bacillota</taxon>
        <taxon>Bacilli</taxon>
        <taxon>Lactobacillales</taxon>
        <taxon>Streptococcaceae</taxon>
        <taxon>Streptococcus</taxon>
    </lineage>
</organism>
<protein>
    <recommendedName>
        <fullName evidence="1">Large ribosomal subunit protein bL33B</fullName>
    </recommendedName>
    <alternativeName>
        <fullName evidence="1">50S ribosomal protein L33 2</fullName>
    </alternativeName>
</protein>
<feature type="chain" id="PRO_0000356707" description="Large ribosomal subunit protein bL33B">
    <location>
        <begin position="1"/>
        <end position="50"/>
    </location>
</feature>
<sequence length="50" mass="5687">MAQKKASLACTECGSRNYSIGVSSTPKPTRLEVNKFCKYCKKYTIHKETR</sequence>
<evidence type="ECO:0000255" key="1">
    <source>
        <dbReference type="HAMAP-Rule" id="MF_00294"/>
    </source>
</evidence>
<comment type="similarity">
    <text evidence="1">Belongs to the bacterial ribosomal protein bL33 family.</text>
</comment>
<name>RL332_STRA5</name>
<accession>Q8DWZ4</accession>
<reference key="1">
    <citation type="journal article" date="2002" name="Proc. Natl. Acad. Sci. U.S.A.">
        <title>Complete genome sequence and comparative genomic analysis of an emerging human pathogen, serotype V Streptococcus agalactiae.</title>
        <authorList>
            <person name="Tettelin H."/>
            <person name="Masignani V."/>
            <person name="Cieslewicz M.J."/>
            <person name="Eisen J.A."/>
            <person name="Peterson S.N."/>
            <person name="Wessels M.R."/>
            <person name="Paulsen I.T."/>
            <person name="Nelson K.E."/>
            <person name="Margarit I."/>
            <person name="Read T.D."/>
            <person name="Madoff L.C."/>
            <person name="Wolf A.M."/>
            <person name="Beanan M.J."/>
            <person name="Brinkac L.M."/>
            <person name="Daugherty S.C."/>
            <person name="DeBoy R.T."/>
            <person name="Durkin A.S."/>
            <person name="Kolonay J.F."/>
            <person name="Madupu R."/>
            <person name="Lewis M.R."/>
            <person name="Radune D."/>
            <person name="Fedorova N.B."/>
            <person name="Scanlan D."/>
            <person name="Khouri H.M."/>
            <person name="Mulligan S."/>
            <person name="Carty H.A."/>
            <person name="Cline R.T."/>
            <person name="Van Aken S.E."/>
            <person name="Gill J."/>
            <person name="Scarselli M."/>
            <person name="Mora M."/>
            <person name="Iacobini E.T."/>
            <person name="Brettoni C."/>
            <person name="Galli G."/>
            <person name="Mariani M."/>
            <person name="Vegni F."/>
            <person name="Maione D."/>
            <person name="Rinaudo D."/>
            <person name="Rappuoli R."/>
            <person name="Telford J.L."/>
            <person name="Kasper D.L."/>
            <person name="Grandi G."/>
            <person name="Fraser C.M."/>
        </authorList>
    </citation>
    <scope>NUCLEOTIDE SEQUENCE [LARGE SCALE GENOMIC DNA]</scope>
    <source>
        <strain>ATCC BAA-611 / 2603 V/R</strain>
    </source>
</reference>
<gene>
    <name evidence="1" type="primary">rpmG2</name>
    <name type="ordered locus">SAG2065</name>
</gene>
<proteinExistence type="inferred from homology"/>
<dbReference type="EMBL" id="AE009948">
    <property type="protein sequence ID" value="AAN00924.1"/>
    <property type="molecule type" value="Genomic_DNA"/>
</dbReference>
<dbReference type="RefSeq" id="NP_689051.1">
    <property type="nucleotide sequence ID" value="NC_004116.1"/>
</dbReference>
<dbReference type="SMR" id="Q8DWZ4"/>
<dbReference type="STRING" id="208435.SAG2065"/>
<dbReference type="KEGG" id="sag:SAG2065"/>
<dbReference type="PATRIC" id="fig|208435.3.peg.2067"/>
<dbReference type="HOGENOM" id="CLU_190949_0_1_9"/>
<dbReference type="OrthoDB" id="9801333at2"/>
<dbReference type="Proteomes" id="UP000000821">
    <property type="component" value="Chromosome"/>
</dbReference>
<dbReference type="GO" id="GO:0005737">
    <property type="term" value="C:cytoplasm"/>
    <property type="evidence" value="ECO:0007669"/>
    <property type="project" value="UniProtKB-ARBA"/>
</dbReference>
<dbReference type="GO" id="GO:1990904">
    <property type="term" value="C:ribonucleoprotein complex"/>
    <property type="evidence" value="ECO:0007669"/>
    <property type="project" value="UniProtKB-KW"/>
</dbReference>
<dbReference type="GO" id="GO:0005840">
    <property type="term" value="C:ribosome"/>
    <property type="evidence" value="ECO:0007669"/>
    <property type="project" value="UniProtKB-KW"/>
</dbReference>
<dbReference type="GO" id="GO:0003735">
    <property type="term" value="F:structural constituent of ribosome"/>
    <property type="evidence" value="ECO:0007669"/>
    <property type="project" value="InterPro"/>
</dbReference>
<dbReference type="GO" id="GO:0006412">
    <property type="term" value="P:translation"/>
    <property type="evidence" value="ECO:0007669"/>
    <property type="project" value="UniProtKB-UniRule"/>
</dbReference>
<dbReference type="Gene3D" id="2.20.28.120">
    <property type="entry name" value="Ribosomal protein L33"/>
    <property type="match status" value="1"/>
</dbReference>
<dbReference type="HAMAP" id="MF_00294">
    <property type="entry name" value="Ribosomal_bL33"/>
    <property type="match status" value="1"/>
</dbReference>
<dbReference type="InterPro" id="IPR001705">
    <property type="entry name" value="Ribosomal_bL33"/>
</dbReference>
<dbReference type="InterPro" id="IPR038584">
    <property type="entry name" value="Ribosomal_bL33_sf"/>
</dbReference>
<dbReference type="InterPro" id="IPR011332">
    <property type="entry name" value="Ribosomal_zn-bd"/>
</dbReference>
<dbReference type="NCBIfam" id="NF001764">
    <property type="entry name" value="PRK00504.1"/>
    <property type="match status" value="1"/>
</dbReference>
<dbReference type="NCBIfam" id="TIGR01023">
    <property type="entry name" value="rpmG_bact"/>
    <property type="match status" value="1"/>
</dbReference>
<dbReference type="PANTHER" id="PTHR43168">
    <property type="entry name" value="50S RIBOSOMAL PROTEIN L33, CHLOROPLASTIC"/>
    <property type="match status" value="1"/>
</dbReference>
<dbReference type="PANTHER" id="PTHR43168:SF5">
    <property type="entry name" value="LARGE RIBOSOMAL SUBUNIT PROTEIN BL33B"/>
    <property type="match status" value="1"/>
</dbReference>
<dbReference type="Pfam" id="PF00471">
    <property type="entry name" value="Ribosomal_L33"/>
    <property type="match status" value="1"/>
</dbReference>
<dbReference type="SUPFAM" id="SSF57829">
    <property type="entry name" value="Zn-binding ribosomal proteins"/>
    <property type="match status" value="1"/>
</dbReference>
<keyword id="KW-1185">Reference proteome</keyword>
<keyword id="KW-0687">Ribonucleoprotein</keyword>
<keyword id="KW-0689">Ribosomal protein</keyword>